<organism>
    <name type="scientific">Xanthomonas axonopodis pv. citri (strain 306)</name>
    <dbReference type="NCBI Taxonomy" id="190486"/>
    <lineage>
        <taxon>Bacteria</taxon>
        <taxon>Pseudomonadati</taxon>
        <taxon>Pseudomonadota</taxon>
        <taxon>Gammaproteobacteria</taxon>
        <taxon>Lysobacterales</taxon>
        <taxon>Lysobacteraceae</taxon>
        <taxon>Xanthomonas</taxon>
    </lineage>
</organism>
<comment type="function">
    <text evidence="1">Involved in chemotaxis. Part of a chemotaxis signal transduction system that modulates chemotaxis in response to various stimuli. Catalyzes the demethylation of specific methylglutamate residues introduced into the chemoreceptors (methyl-accepting chemotaxis proteins or MCP) by CheR. Also mediates the irreversible deamidation of specific glutamine residues to glutamic acid.</text>
</comment>
<comment type="catalytic activity">
    <reaction evidence="1">
        <text>[protein]-L-glutamate 5-O-methyl ester + H2O = L-glutamyl-[protein] + methanol + H(+)</text>
        <dbReference type="Rhea" id="RHEA:23236"/>
        <dbReference type="Rhea" id="RHEA-COMP:10208"/>
        <dbReference type="Rhea" id="RHEA-COMP:10311"/>
        <dbReference type="ChEBI" id="CHEBI:15377"/>
        <dbReference type="ChEBI" id="CHEBI:15378"/>
        <dbReference type="ChEBI" id="CHEBI:17790"/>
        <dbReference type="ChEBI" id="CHEBI:29973"/>
        <dbReference type="ChEBI" id="CHEBI:82795"/>
        <dbReference type="EC" id="3.1.1.61"/>
    </reaction>
</comment>
<comment type="catalytic activity">
    <reaction evidence="1">
        <text>L-glutaminyl-[protein] + H2O = L-glutamyl-[protein] + NH4(+)</text>
        <dbReference type="Rhea" id="RHEA:16441"/>
        <dbReference type="Rhea" id="RHEA-COMP:10207"/>
        <dbReference type="Rhea" id="RHEA-COMP:10208"/>
        <dbReference type="ChEBI" id="CHEBI:15377"/>
        <dbReference type="ChEBI" id="CHEBI:28938"/>
        <dbReference type="ChEBI" id="CHEBI:29973"/>
        <dbReference type="ChEBI" id="CHEBI:30011"/>
        <dbReference type="EC" id="3.5.1.44"/>
    </reaction>
</comment>
<comment type="subcellular location">
    <subcellularLocation>
        <location evidence="1">Cytoplasm</location>
    </subcellularLocation>
</comment>
<comment type="domain">
    <text evidence="1">Contains a C-terminal catalytic domain, and an N-terminal region which modulates catalytic activity.</text>
</comment>
<comment type="PTM">
    <text evidence="1">Phosphorylated by CheA. Phosphorylation of the N-terminal regulatory domain activates the methylesterase activity.</text>
</comment>
<comment type="similarity">
    <text evidence="1">Belongs to the CheB family.</text>
</comment>
<accession>Q8PLB4</accession>
<gene>
    <name evidence="1" type="primary">cheB1</name>
    <name type="ordered locus">XAC1888</name>
</gene>
<proteinExistence type="inferred from homology"/>
<sequence length="358" mass="38028">MTLETPVRVLIVDDSAVVRQMLTEILSRDAGIEVVGSAADPLLAREKIKRLNPDVITLDVEMPRMDGLVFLENLMRLRPTPVVMISSLTERGADTTLQALSLGAVDFVSKPKIDVARGLEGYAEEIVSKVKMAAKAKVSALNRPSAPKVTLDMQSAPVAGSALRFRTTDRLIAIGASAGGTEALRVVLEHMPADAPAVVMTQHLPASFSTAFAERLNRHSAMSVREATDGEAILPGHAYLPPGGQHLRIIRDGARWRCRIDDGPPVNRHKPAVDVLFRSVAANAGPNAVGAILTGMGDDGARGLLEMLQAGAPTLVQDEASSVVWGMPGAAYKLGAAQEVVPLDRVAERLLALSAQAR</sequence>
<reference key="1">
    <citation type="journal article" date="2002" name="Nature">
        <title>Comparison of the genomes of two Xanthomonas pathogens with differing host specificities.</title>
        <authorList>
            <person name="da Silva A.C.R."/>
            <person name="Ferro J.A."/>
            <person name="Reinach F.C."/>
            <person name="Farah C.S."/>
            <person name="Furlan L.R."/>
            <person name="Quaggio R.B."/>
            <person name="Monteiro-Vitorello C.B."/>
            <person name="Van Sluys M.A."/>
            <person name="Almeida N.F. Jr."/>
            <person name="Alves L.M.C."/>
            <person name="do Amaral A.M."/>
            <person name="Bertolini M.C."/>
            <person name="Camargo L.E.A."/>
            <person name="Camarotte G."/>
            <person name="Cannavan F."/>
            <person name="Cardozo J."/>
            <person name="Chambergo F."/>
            <person name="Ciapina L.P."/>
            <person name="Cicarelli R.M.B."/>
            <person name="Coutinho L.L."/>
            <person name="Cursino-Santos J.R."/>
            <person name="El-Dorry H."/>
            <person name="Faria J.B."/>
            <person name="Ferreira A.J.S."/>
            <person name="Ferreira R.C.C."/>
            <person name="Ferro M.I.T."/>
            <person name="Formighieri E.F."/>
            <person name="Franco M.C."/>
            <person name="Greggio C.C."/>
            <person name="Gruber A."/>
            <person name="Katsuyama A.M."/>
            <person name="Kishi L.T."/>
            <person name="Leite R.P."/>
            <person name="Lemos E.G.M."/>
            <person name="Lemos M.V.F."/>
            <person name="Locali E.C."/>
            <person name="Machado M.A."/>
            <person name="Madeira A.M.B.N."/>
            <person name="Martinez-Rossi N.M."/>
            <person name="Martins E.C."/>
            <person name="Meidanis J."/>
            <person name="Menck C.F.M."/>
            <person name="Miyaki C.Y."/>
            <person name="Moon D.H."/>
            <person name="Moreira L.M."/>
            <person name="Novo M.T.M."/>
            <person name="Okura V.K."/>
            <person name="Oliveira M.C."/>
            <person name="Oliveira V.R."/>
            <person name="Pereira H.A."/>
            <person name="Rossi A."/>
            <person name="Sena J.A.D."/>
            <person name="Silva C."/>
            <person name="de Souza R.F."/>
            <person name="Spinola L.A.F."/>
            <person name="Takita M.A."/>
            <person name="Tamura R.E."/>
            <person name="Teixeira E.C."/>
            <person name="Tezza R.I.D."/>
            <person name="Trindade dos Santos M."/>
            <person name="Truffi D."/>
            <person name="Tsai S.M."/>
            <person name="White F.F."/>
            <person name="Setubal J.C."/>
            <person name="Kitajima J.P."/>
        </authorList>
    </citation>
    <scope>NUCLEOTIDE SEQUENCE [LARGE SCALE GENOMIC DNA]</scope>
    <source>
        <strain>306</strain>
    </source>
</reference>
<name>CHEB1_XANAC</name>
<keyword id="KW-0145">Chemotaxis</keyword>
<keyword id="KW-0963">Cytoplasm</keyword>
<keyword id="KW-0378">Hydrolase</keyword>
<keyword id="KW-0597">Phosphoprotein</keyword>
<dbReference type="EC" id="3.1.1.61" evidence="1"/>
<dbReference type="EC" id="3.5.1.44" evidence="1"/>
<dbReference type="EMBL" id="AE008923">
    <property type="protein sequence ID" value="AAM36750.1"/>
    <property type="molecule type" value="Genomic_DNA"/>
</dbReference>
<dbReference type="RefSeq" id="WP_003486327.1">
    <property type="nucleotide sequence ID" value="NC_003919.1"/>
</dbReference>
<dbReference type="SMR" id="Q8PLB4"/>
<dbReference type="KEGG" id="xac:XAC1888"/>
<dbReference type="eggNOG" id="COG2201">
    <property type="taxonomic scope" value="Bacteria"/>
</dbReference>
<dbReference type="HOGENOM" id="CLU_000445_51_0_6"/>
<dbReference type="Proteomes" id="UP000000576">
    <property type="component" value="Chromosome"/>
</dbReference>
<dbReference type="GO" id="GO:0005737">
    <property type="term" value="C:cytoplasm"/>
    <property type="evidence" value="ECO:0007669"/>
    <property type="project" value="UniProtKB-SubCell"/>
</dbReference>
<dbReference type="GO" id="GO:0000156">
    <property type="term" value="F:phosphorelay response regulator activity"/>
    <property type="evidence" value="ECO:0007669"/>
    <property type="project" value="InterPro"/>
</dbReference>
<dbReference type="GO" id="GO:0008984">
    <property type="term" value="F:protein-glutamate methylesterase activity"/>
    <property type="evidence" value="ECO:0007669"/>
    <property type="project" value="UniProtKB-UniRule"/>
</dbReference>
<dbReference type="GO" id="GO:0050568">
    <property type="term" value="F:protein-glutamine glutaminase activity"/>
    <property type="evidence" value="ECO:0007669"/>
    <property type="project" value="UniProtKB-UniRule"/>
</dbReference>
<dbReference type="GO" id="GO:0006935">
    <property type="term" value="P:chemotaxis"/>
    <property type="evidence" value="ECO:0007669"/>
    <property type="project" value="UniProtKB-UniRule"/>
</dbReference>
<dbReference type="CDD" id="cd16432">
    <property type="entry name" value="CheB_Rec"/>
    <property type="match status" value="1"/>
</dbReference>
<dbReference type="CDD" id="cd17541">
    <property type="entry name" value="REC_CheB-like"/>
    <property type="match status" value="1"/>
</dbReference>
<dbReference type="FunFam" id="3.40.50.2300:FF:000060">
    <property type="entry name" value="Protein-glutamate methylesterase/protein-glutamine glutaminase"/>
    <property type="match status" value="1"/>
</dbReference>
<dbReference type="Gene3D" id="3.40.50.2300">
    <property type="match status" value="1"/>
</dbReference>
<dbReference type="Gene3D" id="3.40.50.180">
    <property type="entry name" value="Methylesterase CheB, C-terminal domain"/>
    <property type="match status" value="1"/>
</dbReference>
<dbReference type="HAMAP" id="MF_00099">
    <property type="entry name" value="CheB_chemtxs"/>
    <property type="match status" value="1"/>
</dbReference>
<dbReference type="InterPro" id="IPR008248">
    <property type="entry name" value="CheB-like"/>
</dbReference>
<dbReference type="InterPro" id="IPR035909">
    <property type="entry name" value="CheB_C"/>
</dbReference>
<dbReference type="InterPro" id="IPR011006">
    <property type="entry name" value="CheY-like_superfamily"/>
</dbReference>
<dbReference type="InterPro" id="IPR000673">
    <property type="entry name" value="Sig_transdc_resp-reg_Me-estase"/>
</dbReference>
<dbReference type="InterPro" id="IPR001789">
    <property type="entry name" value="Sig_transdc_resp-reg_receiver"/>
</dbReference>
<dbReference type="NCBIfam" id="NF001965">
    <property type="entry name" value="PRK00742.1"/>
    <property type="match status" value="1"/>
</dbReference>
<dbReference type="NCBIfam" id="NF009206">
    <property type="entry name" value="PRK12555.1"/>
    <property type="match status" value="1"/>
</dbReference>
<dbReference type="PANTHER" id="PTHR42872">
    <property type="entry name" value="PROTEIN-GLUTAMATE METHYLESTERASE/PROTEIN-GLUTAMINE GLUTAMINASE"/>
    <property type="match status" value="1"/>
</dbReference>
<dbReference type="PANTHER" id="PTHR42872:SF6">
    <property type="entry name" value="PROTEIN-GLUTAMATE METHYLESTERASE_PROTEIN-GLUTAMINE GLUTAMINASE"/>
    <property type="match status" value="1"/>
</dbReference>
<dbReference type="Pfam" id="PF01339">
    <property type="entry name" value="CheB_methylest"/>
    <property type="match status" value="1"/>
</dbReference>
<dbReference type="Pfam" id="PF00072">
    <property type="entry name" value="Response_reg"/>
    <property type="match status" value="1"/>
</dbReference>
<dbReference type="PIRSF" id="PIRSF000876">
    <property type="entry name" value="RR_chemtxs_CheB"/>
    <property type="match status" value="1"/>
</dbReference>
<dbReference type="SMART" id="SM00448">
    <property type="entry name" value="REC"/>
    <property type="match status" value="1"/>
</dbReference>
<dbReference type="SUPFAM" id="SSF52172">
    <property type="entry name" value="CheY-like"/>
    <property type="match status" value="1"/>
</dbReference>
<dbReference type="SUPFAM" id="SSF52738">
    <property type="entry name" value="Methylesterase CheB, C-terminal domain"/>
    <property type="match status" value="1"/>
</dbReference>
<dbReference type="PROSITE" id="PS50122">
    <property type="entry name" value="CHEB"/>
    <property type="match status" value="1"/>
</dbReference>
<dbReference type="PROSITE" id="PS50110">
    <property type="entry name" value="RESPONSE_REGULATORY"/>
    <property type="match status" value="1"/>
</dbReference>
<feature type="chain" id="PRO_0000158043" description="Protein-glutamate methylesterase/protein-glutamine glutaminase 1">
    <location>
        <begin position="1"/>
        <end position="358"/>
    </location>
</feature>
<feature type="domain" description="Response regulatory" evidence="1">
    <location>
        <begin position="8"/>
        <end position="125"/>
    </location>
</feature>
<feature type="domain" description="CheB-type methylesterase" evidence="1">
    <location>
        <begin position="165"/>
        <end position="352"/>
    </location>
</feature>
<feature type="active site" evidence="1">
    <location>
        <position position="177"/>
    </location>
</feature>
<feature type="active site" evidence="1">
    <location>
        <position position="203"/>
    </location>
</feature>
<feature type="active site" evidence="1">
    <location>
        <position position="299"/>
    </location>
</feature>
<feature type="modified residue" description="4-aspartylphosphate" evidence="1">
    <location>
        <position position="59"/>
    </location>
</feature>
<evidence type="ECO:0000255" key="1">
    <source>
        <dbReference type="HAMAP-Rule" id="MF_00099"/>
    </source>
</evidence>
<protein>
    <recommendedName>
        <fullName evidence="1">Protein-glutamate methylesterase/protein-glutamine glutaminase 1</fullName>
        <ecNumber evidence="1">3.1.1.61</ecNumber>
        <ecNumber evidence="1">3.5.1.44</ecNumber>
    </recommendedName>
</protein>